<gene>
    <name evidence="1" type="primary">lipA</name>
    <name type="ordered locus">DIP1641</name>
</gene>
<feature type="chain" id="PRO_0000102308" description="Lipoyl synthase">
    <location>
        <begin position="1"/>
        <end position="349"/>
    </location>
</feature>
<feature type="domain" description="Radical SAM core" evidence="2">
    <location>
        <begin position="67"/>
        <end position="281"/>
    </location>
</feature>
<feature type="binding site" evidence="1">
    <location>
        <position position="55"/>
    </location>
    <ligand>
        <name>[4Fe-4S] cluster</name>
        <dbReference type="ChEBI" id="CHEBI:49883"/>
        <label>1</label>
    </ligand>
</feature>
<feature type="binding site" evidence="1">
    <location>
        <position position="60"/>
    </location>
    <ligand>
        <name>[4Fe-4S] cluster</name>
        <dbReference type="ChEBI" id="CHEBI:49883"/>
        <label>1</label>
    </ligand>
</feature>
<feature type="binding site" evidence="1">
    <location>
        <position position="66"/>
    </location>
    <ligand>
        <name>[4Fe-4S] cluster</name>
        <dbReference type="ChEBI" id="CHEBI:49883"/>
        <label>1</label>
    </ligand>
</feature>
<feature type="binding site" evidence="1">
    <location>
        <position position="81"/>
    </location>
    <ligand>
        <name>[4Fe-4S] cluster</name>
        <dbReference type="ChEBI" id="CHEBI:49883"/>
        <label>2</label>
        <note>4Fe-4S-S-AdoMet</note>
    </ligand>
</feature>
<feature type="binding site" evidence="1">
    <location>
        <position position="85"/>
    </location>
    <ligand>
        <name>[4Fe-4S] cluster</name>
        <dbReference type="ChEBI" id="CHEBI:49883"/>
        <label>2</label>
        <note>4Fe-4S-S-AdoMet</note>
    </ligand>
</feature>
<feature type="binding site" evidence="1">
    <location>
        <position position="88"/>
    </location>
    <ligand>
        <name>[4Fe-4S] cluster</name>
        <dbReference type="ChEBI" id="CHEBI:49883"/>
        <label>2</label>
        <note>4Fe-4S-S-AdoMet</note>
    </ligand>
</feature>
<feature type="binding site" evidence="1">
    <location>
        <position position="292"/>
    </location>
    <ligand>
        <name>[4Fe-4S] cluster</name>
        <dbReference type="ChEBI" id="CHEBI:49883"/>
        <label>1</label>
    </ligand>
</feature>
<dbReference type="EC" id="2.8.1.8" evidence="1"/>
<dbReference type="EMBL" id="BX248358">
    <property type="protein sequence ID" value="CAE50169.1"/>
    <property type="status" value="ALT_INIT"/>
    <property type="molecule type" value="Genomic_DNA"/>
</dbReference>
<dbReference type="RefSeq" id="WP_014316909.1">
    <property type="nucleotide sequence ID" value="NC_002935.2"/>
</dbReference>
<dbReference type="SMR" id="P61194"/>
<dbReference type="STRING" id="257309.DIP1641"/>
<dbReference type="KEGG" id="cdi:DIP1641"/>
<dbReference type="HOGENOM" id="CLU_033144_2_1_11"/>
<dbReference type="UniPathway" id="UPA00538">
    <property type="reaction ID" value="UER00593"/>
</dbReference>
<dbReference type="Proteomes" id="UP000002198">
    <property type="component" value="Chromosome"/>
</dbReference>
<dbReference type="GO" id="GO:0005737">
    <property type="term" value="C:cytoplasm"/>
    <property type="evidence" value="ECO:0007669"/>
    <property type="project" value="UniProtKB-SubCell"/>
</dbReference>
<dbReference type="GO" id="GO:0051539">
    <property type="term" value="F:4 iron, 4 sulfur cluster binding"/>
    <property type="evidence" value="ECO:0007669"/>
    <property type="project" value="UniProtKB-UniRule"/>
</dbReference>
<dbReference type="GO" id="GO:0016992">
    <property type="term" value="F:lipoate synthase activity"/>
    <property type="evidence" value="ECO:0007669"/>
    <property type="project" value="UniProtKB-UniRule"/>
</dbReference>
<dbReference type="GO" id="GO:0046872">
    <property type="term" value="F:metal ion binding"/>
    <property type="evidence" value="ECO:0007669"/>
    <property type="project" value="UniProtKB-KW"/>
</dbReference>
<dbReference type="CDD" id="cd01335">
    <property type="entry name" value="Radical_SAM"/>
    <property type="match status" value="1"/>
</dbReference>
<dbReference type="Gene3D" id="3.20.20.70">
    <property type="entry name" value="Aldolase class I"/>
    <property type="match status" value="1"/>
</dbReference>
<dbReference type="HAMAP" id="MF_00206">
    <property type="entry name" value="Lipoyl_synth"/>
    <property type="match status" value="1"/>
</dbReference>
<dbReference type="InterPro" id="IPR013785">
    <property type="entry name" value="Aldolase_TIM"/>
</dbReference>
<dbReference type="InterPro" id="IPR006638">
    <property type="entry name" value="Elp3/MiaA/NifB-like_rSAM"/>
</dbReference>
<dbReference type="InterPro" id="IPR031691">
    <property type="entry name" value="LIAS_N"/>
</dbReference>
<dbReference type="InterPro" id="IPR003698">
    <property type="entry name" value="Lipoyl_synth"/>
</dbReference>
<dbReference type="InterPro" id="IPR007197">
    <property type="entry name" value="rSAM"/>
</dbReference>
<dbReference type="NCBIfam" id="NF004019">
    <property type="entry name" value="PRK05481.1"/>
    <property type="match status" value="1"/>
</dbReference>
<dbReference type="NCBIfam" id="NF009544">
    <property type="entry name" value="PRK12928.1"/>
    <property type="match status" value="1"/>
</dbReference>
<dbReference type="PANTHER" id="PTHR10949">
    <property type="entry name" value="LIPOYL SYNTHASE"/>
    <property type="match status" value="1"/>
</dbReference>
<dbReference type="PANTHER" id="PTHR10949:SF0">
    <property type="entry name" value="LIPOYL SYNTHASE, MITOCHONDRIAL"/>
    <property type="match status" value="1"/>
</dbReference>
<dbReference type="Pfam" id="PF16881">
    <property type="entry name" value="LIAS_N"/>
    <property type="match status" value="1"/>
</dbReference>
<dbReference type="Pfam" id="PF04055">
    <property type="entry name" value="Radical_SAM"/>
    <property type="match status" value="1"/>
</dbReference>
<dbReference type="PIRSF" id="PIRSF005963">
    <property type="entry name" value="Lipoyl_synth"/>
    <property type="match status" value="1"/>
</dbReference>
<dbReference type="SFLD" id="SFLDF00271">
    <property type="entry name" value="lipoyl_synthase"/>
    <property type="match status" value="1"/>
</dbReference>
<dbReference type="SFLD" id="SFLDG01058">
    <property type="entry name" value="lipoyl_synthase_like"/>
    <property type="match status" value="1"/>
</dbReference>
<dbReference type="SMART" id="SM00729">
    <property type="entry name" value="Elp3"/>
    <property type="match status" value="1"/>
</dbReference>
<dbReference type="SUPFAM" id="SSF102114">
    <property type="entry name" value="Radical SAM enzymes"/>
    <property type="match status" value="1"/>
</dbReference>
<dbReference type="PROSITE" id="PS51918">
    <property type="entry name" value="RADICAL_SAM"/>
    <property type="match status" value="1"/>
</dbReference>
<sequence length="349" mass="39123">MTKAPEGRRMLRVEARNSQTPIESKPRWIRTAVKTGPEYQDMKKKVSGASLHTVCQEAGCPNIHECWESREATFLIGGANCSRRCDFCQINSAKPEPLDRDEPRRVAESVREMQLNYSTITGVTRDDLEDEGAWLYAEVVRKIHELNPHTGVENLTPDFSGKPDLLQEVFEARPEVFAHNLETVPRIFKRIRPAFRYERSLDVIRQARDFGLVTKSNLILGMGETVDEIRDALVDLHSAGCDIITITQYLRPGPMYHPIDRWVKPEEFIDHADFARELGFGAVMSGPLVRSSYRAGKLYAEALAARGESLPENLAHLATTADGSTAQEANTLLEKYGPSQDTPVVSSKA</sequence>
<protein>
    <recommendedName>
        <fullName evidence="1">Lipoyl synthase</fullName>
        <ecNumber evidence="1">2.8.1.8</ecNumber>
    </recommendedName>
    <alternativeName>
        <fullName evidence="1">Lip-syn</fullName>
        <shortName evidence="1">LS</shortName>
    </alternativeName>
    <alternativeName>
        <fullName evidence="1">Lipoate synthase</fullName>
    </alternativeName>
    <alternativeName>
        <fullName evidence="1">Lipoic acid synthase</fullName>
    </alternativeName>
    <alternativeName>
        <fullName evidence="1">Sulfur insertion protein LipA</fullName>
    </alternativeName>
</protein>
<keyword id="KW-0004">4Fe-4S</keyword>
<keyword id="KW-0963">Cytoplasm</keyword>
<keyword id="KW-0408">Iron</keyword>
<keyword id="KW-0411">Iron-sulfur</keyword>
<keyword id="KW-0479">Metal-binding</keyword>
<keyword id="KW-1185">Reference proteome</keyword>
<keyword id="KW-0949">S-adenosyl-L-methionine</keyword>
<keyword id="KW-0808">Transferase</keyword>
<evidence type="ECO:0000255" key="1">
    <source>
        <dbReference type="HAMAP-Rule" id="MF_00206"/>
    </source>
</evidence>
<evidence type="ECO:0000255" key="2">
    <source>
        <dbReference type="PROSITE-ProRule" id="PRU01266"/>
    </source>
</evidence>
<evidence type="ECO:0000305" key="3"/>
<comment type="function">
    <text evidence="1">Catalyzes the radical-mediated insertion of two sulfur atoms into the C-6 and C-8 positions of the octanoyl moiety bound to the lipoyl domains of lipoate-dependent enzymes, thereby converting the octanoylated domains into lipoylated derivatives.</text>
</comment>
<comment type="catalytic activity">
    <reaction evidence="1">
        <text>[[Fe-S] cluster scaffold protein carrying a second [4Fe-4S](2+) cluster] + N(6)-octanoyl-L-lysyl-[protein] + 2 oxidized [2Fe-2S]-[ferredoxin] + 2 S-adenosyl-L-methionine + 4 H(+) = [[Fe-S] cluster scaffold protein] + N(6)-[(R)-dihydrolipoyl]-L-lysyl-[protein] + 4 Fe(3+) + 2 hydrogen sulfide + 2 5'-deoxyadenosine + 2 L-methionine + 2 reduced [2Fe-2S]-[ferredoxin]</text>
        <dbReference type="Rhea" id="RHEA:16585"/>
        <dbReference type="Rhea" id="RHEA-COMP:9928"/>
        <dbReference type="Rhea" id="RHEA-COMP:10000"/>
        <dbReference type="Rhea" id="RHEA-COMP:10001"/>
        <dbReference type="Rhea" id="RHEA-COMP:10475"/>
        <dbReference type="Rhea" id="RHEA-COMP:14568"/>
        <dbReference type="Rhea" id="RHEA-COMP:14569"/>
        <dbReference type="ChEBI" id="CHEBI:15378"/>
        <dbReference type="ChEBI" id="CHEBI:17319"/>
        <dbReference type="ChEBI" id="CHEBI:29034"/>
        <dbReference type="ChEBI" id="CHEBI:29919"/>
        <dbReference type="ChEBI" id="CHEBI:33722"/>
        <dbReference type="ChEBI" id="CHEBI:33737"/>
        <dbReference type="ChEBI" id="CHEBI:33738"/>
        <dbReference type="ChEBI" id="CHEBI:57844"/>
        <dbReference type="ChEBI" id="CHEBI:59789"/>
        <dbReference type="ChEBI" id="CHEBI:78809"/>
        <dbReference type="ChEBI" id="CHEBI:83100"/>
        <dbReference type="EC" id="2.8.1.8"/>
    </reaction>
</comment>
<comment type="cofactor">
    <cofactor evidence="1">
        <name>[4Fe-4S] cluster</name>
        <dbReference type="ChEBI" id="CHEBI:49883"/>
    </cofactor>
    <text evidence="1">Binds 2 [4Fe-4S] clusters per subunit. One cluster is coordinated with 3 cysteines and an exchangeable S-adenosyl-L-methionine.</text>
</comment>
<comment type="pathway">
    <text evidence="1">Protein modification; protein lipoylation via endogenous pathway; protein N(6)-(lipoyl)lysine from octanoyl-[acyl-carrier-protein]: step 2/2.</text>
</comment>
<comment type="subcellular location">
    <subcellularLocation>
        <location evidence="1">Cytoplasm</location>
    </subcellularLocation>
</comment>
<comment type="similarity">
    <text evidence="1">Belongs to the radical SAM superfamily. Lipoyl synthase family.</text>
</comment>
<comment type="sequence caution" evidence="3">
    <conflict type="erroneous initiation">
        <sequence resource="EMBL-CDS" id="CAE50169"/>
    </conflict>
</comment>
<accession>P61194</accession>
<organism>
    <name type="scientific">Corynebacterium diphtheriae (strain ATCC 700971 / NCTC 13129 / Biotype gravis)</name>
    <dbReference type="NCBI Taxonomy" id="257309"/>
    <lineage>
        <taxon>Bacteria</taxon>
        <taxon>Bacillati</taxon>
        <taxon>Actinomycetota</taxon>
        <taxon>Actinomycetes</taxon>
        <taxon>Mycobacteriales</taxon>
        <taxon>Corynebacteriaceae</taxon>
        <taxon>Corynebacterium</taxon>
    </lineage>
</organism>
<proteinExistence type="inferred from homology"/>
<name>LIPA_CORDI</name>
<reference key="1">
    <citation type="journal article" date="2003" name="Nucleic Acids Res.">
        <title>The complete genome sequence and analysis of Corynebacterium diphtheriae NCTC13129.</title>
        <authorList>
            <person name="Cerdeno-Tarraga A.-M."/>
            <person name="Efstratiou A."/>
            <person name="Dover L.G."/>
            <person name="Holden M.T.G."/>
            <person name="Pallen M.J."/>
            <person name="Bentley S.D."/>
            <person name="Besra G.S."/>
            <person name="Churcher C.M."/>
            <person name="James K.D."/>
            <person name="De Zoysa A."/>
            <person name="Chillingworth T."/>
            <person name="Cronin A."/>
            <person name="Dowd L."/>
            <person name="Feltwell T."/>
            <person name="Hamlin N."/>
            <person name="Holroyd S."/>
            <person name="Jagels K."/>
            <person name="Moule S."/>
            <person name="Quail M.A."/>
            <person name="Rabbinowitsch E."/>
            <person name="Rutherford K.M."/>
            <person name="Thomson N.R."/>
            <person name="Unwin L."/>
            <person name="Whitehead S."/>
            <person name="Barrell B.G."/>
            <person name="Parkhill J."/>
        </authorList>
    </citation>
    <scope>NUCLEOTIDE SEQUENCE [LARGE SCALE GENOMIC DNA]</scope>
    <source>
        <strain>ATCC 700971 / NCTC 13129 / Biotype gravis</strain>
    </source>
</reference>